<accession>B1KTJ6</accession>
<sequence>MRTAIIAGNWKMNKTVKEAVELVKELKPLVKDAKCDVVVCPTYVCLPAVLEEVKGSNIKVGAQNMHFEESGAYTGEISPKMLEELGVHYVIIGHSERRQYFNETDETVNKKVKKAFEHNLIPIVCCGESLEQREGNVTEKVLEGQIKVDLKELSKEQVEKLVIAYEPIWAIGTGKTATDEQANETIGYIRTVVKSMYGEDVASKVRIQYGGSVKPGTIKAQMAKEEIDGALVGGASLKAEDFSAIVNF</sequence>
<gene>
    <name evidence="1" type="primary">tpiA</name>
    <name type="ordered locus">CLK_3410</name>
</gene>
<name>TPIS_CLOBM</name>
<keyword id="KW-0963">Cytoplasm</keyword>
<keyword id="KW-0312">Gluconeogenesis</keyword>
<keyword id="KW-0324">Glycolysis</keyword>
<keyword id="KW-0413">Isomerase</keyword>
<reference key="1">
    <citation type="journal article" date="2007" name="PLoS ONE">
        <title>Analysis of the neurotoxin complex genes in Clostridium botulinum A1-A4 and B1 strains: BoNT/A3, /Ba4 and /B1 clusters are located within plasmids.</title>
        <authorList>
            <person name="Smith T.J."/>
            <person name="Hill K.K."/>
            <person name="Foley B.T."/>
            <person name="Detter J.C."/>
            <person name="Munk A.C."/>
            <person name="Bruce D.C."/>
            <person name="Doggett N.A."/>
            <person name="Smith L.A."/>
            <person name="Marks J.D."/>
            <person name="Xie G."/>
            <person name="Brettin T.S."/>
        </authorList>
    </citation>
    <scope>NUCLEOTIDE SEQUENCE [LARGE SCALE GENOMIC DNA]</scope>
    <source>
        <strain>Loch Maree / Type A3</strain>
    </source>
</reference>
<protein>
    <recommendedName>
        <fullName evidence="1">Triosephosphate isomerase</fullName>
        <shortName evidence="1">TIM</shortName>
        <shortName evidence="1">TPI</shortName>
        <ecNumber evidence="1">5.3.1.1</ecNumber>
    </recommendedName>
    <alternativeName>
        <fullName evidence="1">Triose-phosphate isomerase</fullName>
    </alternativeName>
</protein>
<dbReference type="EC" id="5.3.1.1" evidence="1"/>
<dbReference type="EMBL" id="CP000962">
    <property type="protein sequence ID" value="ACA56414.1"/>
    <property type="molecule type" value="Genomic_DNA"/>
</dbReference>
<dbReference type="RefSeq" id="WP_012344289.1">
    <property type="nucleotide sequence ID" value="NC_010520.1"/>
</dbReference>
<dbReference type="SMR" id="B1KTJ6"/>
<dbReference type="KEGG" id="cbl:CLK_3410"/>
<dbReference type="HOGENOM" id="CLU_024251_2_3_9"/>
<dbReference type="UniPathway" id="UPA00109">
    <property type="reaction ID" value="UER00189"/>
</dbReference>
<dbReference type="UniPathway" id="UPA00138"/>
<dbReference type="GO" id="GO:0005829">
    <property type="term" value="C:cytosol"/>
    <property type="evidence" value="ECO:0007669"/>
    <property type="project" value="TreeGrafter"/>
</dbReference>
<dbReference type="GO" id="GO:0004807">
    <property type="term" value="F:triose-phosphate isomerase activity"/>
    <property type="evidence" value="ECO:0007669"/>
    <property type="project" value="UniProtKB-UniRule"/>
</dbReference>
<dbReference type="GO" id="GO:0006094">
    <property type="term" value="P:gluconeogenesis"/>
    <property type="evidence" value="ECO:0007669"/>
    <property type="project" value="UniProtKB-UniRule"/>
</dbReference>
<dbReference type="GO" id="GO:0046166">
    <property type="term" value="P:glyceraldehyde-3-phosphate biosynthetic process"/>
    <property type="evidence" value="ECO:0007669"/>
    <property type="project" value="TreeGrafter"/>
</dbReference>
<dbReference type="GO" id="GO:0019563">
    <property type="term" value="P:glycerol catabolic process"/>
    <property type="evidence" value="ECO:0007669"/>
    <property type="project" value="TreeGrafter"/>
</dbReference>
<dbReference type="GO" id="GO:0006096">
    <property type="term" value="P:glycolytic process"/>
    <property type="evidence" value="ECO:0007669"/>
    <property type="project" value="UniProtKB-UniRule"/>
</dbReference>
<dbReference type="CDD" id="cd00311">
    <property type="entry name" value="TIM"/>
    <property type="match status" value="1"/>
</dbReference>
<dbReference type="FunFam" id="3.20.20.70:FF:000016">
    <property type="entry name" value="Triosephosphate isomerase"/>
    <property type="match status" value="1"/>
</dbReference>
<dbReference type="Gene3D" id="3.20.20.70">
    <property type="entry name" value="Aldolase class I"/>
    <property type="match status" value="1"/>
</dbReference>
<dbReference type="HAMAP" id="MF_00147_B">
    <property type="entry name" value="TIM_B"/>
    <property type="match status" value="1"/>
</dbReference>
<dbReference type="InterPro" id="IPR013785">
    <property type="entry name" value="Aldolase_TIM"/>
</dbReference>
<dbReference type="InterPro" id="IPR035990">
    <property type="entry name" value="TIM_sf"/>
</dbReference>
<dbReference type="InterPro" id="IPR022896">
    <property type="entry name" value="TrioseP_Isoase_bac/euk"/>
</dbReference>
<dbReference type="InterPro" id="IPR000652">
    <property type="entry name" value="Triosephosphate_isomerase"/>
</dbReference>
<dbReference type="InterPro" id="IPR020861">
    <property type="entry name" value="Triosephosphate_isomerase_AS"/>
</dbReference>
<dbReference type="NCBIfam" id="TIGR00419">
    <property type="entry name" value="tim"/>
    <property type="match status" value="1"/>
</dbReference>
<dbReference type="PANTHER" id="PTHR21139">
    <property type="entry name" value="TRIOSEPHOSPHATE ISOMERASE"/>
    <property type="match status" value="1"/>
</dbReference>
<dbReference type="PANTHER" id="PTHR21139:SF42">
    <property type="entry name" value="TRIOSEPHOSPHATE ISOMERASE"/>
    <property type="match status" value="1"/>
</dbReference>
<dbReference type="Pfam" id="PF00121">
    <property type="entry name" value="TIM"/>
    <property type="match status" value="1"/>
</dbReference>
<dbReference type="SUPFAM" id="SSF51351">
    <property type="entry name" value="Triosephosphate isomerase (TIM)"/>
    <property type="match status" value="1"/>
</dbReference>
<dbReference type="PROSITE" id="PS00171">
    <property type="entry name" value="TIM_1"/>
    <property type="match status" value="1"/>
</dbReference>
<dbReference type="PROSITE" id="PS51440">
    <property type="entry name" value="TIM_2"/>
    <property type="match status" value="1"/>
</dbReference>
<evidence type="ECO:0000255" key="1">
    <source>
        <dbReference type="HAMAP-Rule" id="MF_00147"/>
    </source>
</evidence>
<organism>
    <name type="scientific">Clostridium botulinum (strain Loch Maree / Type A3)</name>
    <dbReference type="NCBI Taxonomy" id="498214"/>
    <lineage>
        <taxon>Bacteria</taxon>
        <taxon>Bacillati</taxon>
        <taxon>Bacillota</taxon>
        <taxon>Clostridia</taxon>
        <taxon>Eubacteriales</taxon>
        <taxon>Clostridiaceae</taxon>
        <taxon>Clostridium</taxon>
    </lineage>
</organism>
<proteinExistence type="inferred from homology"/>
<comment type="function">
    <text evidence="1">Involved in the gluconeogenesis. Catalyzes stereospecifically the conversion of dihydroxyacetone phosphate (DHAP) to D-glyceraldehyde-3-phosphate (G3P).</text>
</comment>
<comment type="catalytic activity">
    <reaction evidence="1">
        <text>D-glyceraldehyde 3-phosphate = dihydroxyacetone phosphate</text>
        <dbReference type="Rhea" id="RHEA:18585"/>
        <dbReference type="ChEBI" id="CHEBI:57642"/>
        <dbReference type="ChEBI" id="CHEBI:59776"/>
        <dbReference type="EC" id="5.3.1.1"/>
    </reaction>
</comment>
<comment type="pathway">
    <text evidence="1">Carbohydrate biosynthesis; gluconeogenesis.</text>
</comment>
<comment type="pathway">
    <text evidence="1">Carbohydrate degradation; glycolysis; D-glyceraldehyde 3-phosphate from glycerone phosphate: step 1/1.</text>
</comment>
<comment type="subunit">
    <text evidence="1">Homodimer.</text>
</comment>
<comment type="subcellular location">
    <subcellularLocation>
        <location evidence="1">Cytoplasm</location>
    </subcellularLocation>
</comment>
<comment type="similarity">
    <text evidence="1">Belongs to the triosephosphate isomerase family.</text>
</comment>
<feature type="chain" id="PRO_1000096489" description="Triosephosphate isomerase">
    <location>
        <begin position="1"/>
        <end position="248"/>
    </location>
</feature>
<feature type="active site" description="Electrophile" evidence="1">
    <location>
        <position position="94"/>
    </location>
</feature>
<feature type="active site" description="Proton acceptor" evidence="1">
    <location>
        <position position="166"/>
    </location>
</feature>
<feature type="binding site" evidence="1">
    <location>
        <begin position="9"/>
        <end position="11"/>
    </location>
    <ligand>
        <name>substrate</name>
    </ligand>
</feature>
<feature type="binding site" evidence="1">
    <location>
        <position position="172"/>
    </location>
    <ligand>
        <name>substrate</name>
    </ligand>
</feature>
<feature type="binding site" evidence="1">
    <location>
        <position position="212"/>
    </location>
    <ligand>
        <name>substrate</name>
    </ligand>
</feature>
<feature type="binding site" evidence="1">
    <location>
        <begin position="233"/>
        <end position="234"/>
    </location>
    <ligand>
        <name>substrate</name>
    </ligand>
</feature>